<proteinExistence type="inferred from homology"/>
<dbReference type="EC" id="1.16.-.-" evidence="1"/>
<dbReference type="EMBL" id="AP009240">
    <property type="protein sequence ID" value="BAG76392.1"/>
    <property type="molecule type" value="Genomic_DNA"/>
</dbReference>
<dbReference type="RefSeq" id="WP_000100800.1">
    <property type="nucleotide sequence ID" value="NC_011415.1"/>
</dbReference>
<dbReference type="SMR" id="B6I7W9"/>
<dbReference type="GeneID" id="93776616"/>
<dbReference type="KEGG" id="ecy:ECSE_0868"/>
<dbReference type="HOGENOM" id="CLU_098183_1_2_6"/>
<dbReference type="Proteomes" id="UP000008199">
    <property type="component" value="Chromosome"/>
</dbReference>
<dbReference type="GO" id="GO:0005737">
    <property type="term" value="C:cytoplasm"/>
    <property type="evidence" value="ECO:0007669"/>
    <property type="project" value="UniProtKB-UniRule"/>
</dbReference>
<dbReference type="GO" id="GO:0009295">
    <property type="term" value="C:nucleoid"/>
    <property type="evidence" value="ECO:0007669"/>
    <property type="project" value="UniProtKB-SubCell"/>
</dbReference>
<dbReference type="GO" id="GO:0003677">
    <property type="term" value="F:DNA binding"/>
    <property type="evidence" value="ECO:0007669"/>
    <property type="project" value="UniProtKB-UniRule"/>
</dbReference>
<dbReference type="GO" id="GO:0008199">
    <property type="term" value="F:ferric iron binding"/>
    <property type="evidence" value="ECO:0007669"/>
    <property type="project" value="UniProtKB-UniRule"/>
</dbReference>
<dbReference type="GO" id="GO:0016722">
    <property type="term" value="F:oxidoreductase activity, acting on metal ions"/>
    <property type="evidence" value="ECO:0007669"/>
    <property type="project" value="InterPro"/>
</dbReference>
<dbReference type="GO" id="GO:0030261">
    <property type="term" value="P:chromosome condensation"/>
    <property type="evidence" value="ECO:0007669"/>
    <property type="project" value="UniProtKB-KW"/>
</dbReference>
<dbReference type="GO" id="GO:0006879">
    <property type="term" value="P:intracellular iron ion homeostasis"/>
    <property type="evidence" value="ECO:0007669"/>
    <property type="project" value="UniProtKB-KW"/>
</dbReference>
<dbReference type="CDD" id="cd01043">
    <property type="entry name" value="DPS"/>
    <property type="match status" value="1"/>
</dbReference>
<dbReference type="FunFam" id="1.20.1260.10:FF:000003">
    <property type="entry name" value="DNA protection during starvation protein"/>
    <property type="match status" value="1"/>
</dbReference>
<dbReference type="Gene3D" id="1.20.1260.10">
    <property type="match status" value="1"/>
</dbReference>
<dbReference type="HAMAP" id="MF_01441">
    <property type="entry name" value="Dps"/>
    <property type="match status" value="1"/>
</dbReference>
<dbReference type="InterPro" id="IPR002177">
    <property type="entry name" value="DPS_DNA-bd"/>
</dbReference>
<dbReference type="InterPro" id="IPR023188">
    <property type="entry name" value="DPS_DNA-bd_CS"/>
</dbReference>
<dbReference type="InterPro" id="IPR023067">
    <property type="entry name" value="Dps_gammaproteobac"/>
</dbReference>
<dbReference type="InterPro" id="IPR012347">
    <property type="entry name" value="Ferritin-like"/>
</dbReference>
<dbReference type="InterPro" id="IPR009078">
    <property type="entry name" value="Ferritin-like_SF"/>
</dbReference>
<dbReference type="InterPro" id="IPR008331">
    <property type="entry name" value="Ferritin_DPS_dom"/>
</dbReference>
<dbReference type="NCBIfam" id="NF006975">
    <property type="entry name" value="PRK09448.1"/>
    <property type="match status" value="1"/>
</dbReference>
<dbReference type="PANTHER" id="PTHR42932:SF3">
    <property type="entry name" value="DNA PROTECTION DURING STARVATION PROTEIN"/>
    <property type="match status" value="1"/>
</dbReference>
<dbReference type="PANTHER" id="PTHR42932">
    <property type="entry name" value="GENERAL STRESS PROTEIN 20U"/>
    <property type="match status" value="1"/>
</dbReference>
<dbReference type="Pfam" id="PF00210">
    <property type="entry name" value="Ferritin"/>
    <property type="match status" value="1"/>
</dbReference>
<dbReference type="PIRSF" id="PIRSF005900">
    <property type="entry name" value="Dps"/>
    <property type="match status" value="1"/>
</dbReference>
<dbReference type="PRINTS" id="PR01346">
    <property type="entry name" value="HELNAPAPROT"/>
</dbReference>
<dbReference type="SUPFAM" id="SSF47240">
    <property type="entry name" value="Ferritin-like"/>
    <property type="match status" value="1"/>
</dbReference>
<dbReference type="PROSITE" id="PS00818">
    <property type="entry name" value="DPS_1"/>
    <property type="match status" value="1"/>
</dbReference>
<dbReference type="PROSITE" id="PS00819">
    <property type="entry name" value="DPS_2"/>
    <property type="match status" value="1"/>
</dbReference>
<keyword id="KW-0963">Cytoplasm</keyword>
<keyword id="KW-0226">DNA condensation</keyword>
<keyword id="KW-0238">DNA-binding</keyword>
<keyword id="KW-0408">Iron</keyword>
<keyword id="KW-0409">Iron storage</keyword>
<keyword id="KW-0479">Metal-binding</keyword>
<keyword id="KW-0560">Oxidoreductase</keyword>
<comment type="function">
    <text evidence="1">During stationary phase, binds the chromosome non-specifically, forming a highly ordered and stable dps-DNA co-crystal within which chromosomal DNA is condensed and protected from diverse damages. It protects DNA from oxidative damage by sequestering intracellular Fe(2+) ion and storing it in the form of Fe(3+) oxyhydroxide mineral, which can be released after reduction. One hydrogen peroxide oxidizes two Fe(2+) ions, which prevents hydroxyl radical production by the Fenton reaction. Dps also protects the cell from UV and gamma irradiation, iron and copper toxicity, thermal stress and acid and base shocks. Also shows a weak catalase activity.</text>
</comment>
<comment type="catalytic activity">
    <reaction evidence="1">
        <text>2 Fe(2+) + H2O2 + 2 H(+) = 2 Fe(3+) + 2 H2O</text>
        <dbReference type="Rhea" id="RHEA:48712"/>
        <dbReference type="ChEBI" id="CHEBI:15377"/>
        <dbReference type="ChEBI" id="CHEBI:15378"/>
        <dbReference type="ChEBI" id="CHEBI:16240"/>
        <dbReference type="ChEBI" id="CHEBI:29033"/>
        <dbReference type="ChEBI" id="CHEBI:29034"/>
    </reaction>
</comment>
<comment type="subunit">
    <text evidence="1">Homododecamer. The 12 subunits form a hollow sphere into which the mineral iron core of up to 500 Fe(3+) can be deposited.</text>
</comment>
<comment type="subcellular location">
    <subcellularLocation>
        <location evidence="1">Cytoplasm</location>
        <location evidence="1">Nucleoid</location>
    </subcellularLocation>
</comment>
<comment type="similarity">
    <text evidence="1">Belongs to the Dps family.</text>
</comment>
<evidence type="ECO:0000255" key="1">
    <source>
        <dbReference type="HAMAP-Rule" id="MF_01441"/>
    </source>
</evidence>
<feature type="chain" id="PRO_1000145904" description="DNA protection during starvation protein">
    <location>
        <begin position="1"/>
        <end position="167"/>
    </location>
</feature>
<feature type="binding site" evidence="1">
    <location>
        <position position="51"/>
    </location>
    <ligand>
        <name>Fe cation</name>
        <dbReference type="ChEBI" id="CHEBI:24875"/>
        <label>1</label>
        <note>ligand shared between two neighboring subunits</note>
    </ligand>
</feature>
<feature type="binding site" description="in other chain" evidence="1">
    <location>
        <position position="78"/>
    </location>
    <ligand>
        <name>Fe cation</name>
        <dbReference type="ChEBI" id="CHEBI:24875"/>
        <label>1</label>
        <note>ligand shared between two neighboring subunits</note>
    </ligand>
</feature>
<feature type="binding site" description="in other chain" evidence="1">
    <location>
        <position position="82"/>
    </location>
    <ligand>
        <name>Fe cation</name>
        <dbReference type="ChEBI" id="CHEBI:24875"/>
        <label>1</label>
        <note>ligand shared between two neighboring subunits</note>
    </ligand>
</feature>
<feature type="binding site" evidence="1">
    <location>
        <position position="82"/>
    </location>
    <ligand>
        <name>Fe cation</name>
        <dbReference type="ChEBI" id="CHEBI:24875"/>
        <label>2</label>
    </ligand>
</feature>
<organism>
    <name type="scientific">Escherichia coli (strain SE11)</name>
    <dbReference type="NCBI Taxonomy" id="409438"/>
    <lineage>
        <taxon>Bacteria</taxon>
        <taxon>Pseudomonadati</taxon>
        <taxon>Pseudomonadota</taxon>
        <taxon>Gammaproteobacteria</taxon>
        <taxon>Enterobacterales</taxon>
        <taxon>Enterobacteriaceae</taxon>
        <taxon>Escherichia</taxon>
    </lineage>
</organism>
<sequence>MSTAKLVKSKATNLLYTRNDVSDSEKKATVELLNRQVIQFIDLSLITKQAHWNMRGANFIAVHEMLDGFRTALIDHLDTMAERAVQLGGVALGTTQVINSKTPLKSYPLDIHNVQDHLKELADRYAIVANDVRKAIGEAKDDDTADILTAASRDLDKFLWFIESNIE</sequence>
<protein>
    <recommendedName>
        <fullName evidence="1">DNA protection during starvation protein</fullName>
        <ecNumber evidence="1">1.16.-.-</ecNumber>
    </recommendedName>
</protein>
<name>DPS_ECOSE</name>
<accession>B6I7W9</accession>
<reference key="1">
    <citation type="journal article" date="2008" name="DNA Res.">
        <title>Complete genome sequence and comparative analysis of the wild-type commensal Escherichia coli strain SE11 isolated from a healthy adult.</title>
        <authorList>
            <person name="Oshima K."/>
            <person name="Toh H."/>
            <person name="Ogura Y."/>
            <person name="Sasamoto H."/>
            <person name="Morita H."/>
            <person name="Park S.-H."/>
            <person name="Ooka T."/>
            <person name="Iyoda S."/>
            <person name="Taylor T.D."/>
            <person name="Hayashi T."/>
            <person name="Itoh K."/>
            <person name="Hattori M."/>
        </authorList>
    </citation>
    <scope>NUCLEOTIDE SEQUENCE [LARGE SCALE GENOMIC DNA]</scope>
    <source>
        <strain>SE11</strain>
    </source>
</reference>
<gene>
    <name evidence="1" type="primary">dps</name>
    <name type="ordered locus">ECSE_0868</name>
</gene>